<name>Y149A_MYCGE</name>
<organism>
    <name type="scientific">Mycoplasma genitalium (strain ATCC 33530 / DSM 19775 / NCTC 10195 / G37)</name>
    <name type="common">Mycoplasmoides genitalium</name>
    <dbReference type="NCBI Taxonomy" id="243273"/>
    <lineage>
        <taxon>Bacteria</taxon>
        <taxon>Bacillati</taxon>
        <taxon>Mycoplasmatota</taxon>
        <taxon>Mycoplasmoidales</taxon>
        <taxon>Mycoplasmoidaceae</taxon>
        <taxon>Mycoplasmoides</taxon>
    </lineage>
</organism>
<evidence type="ECO:0000255" key="1"/>
<evidence type="ECO:0000269" key="2">
    <source>
    </source>
</evidence>
<evidence type="ECO:0000305" key="3"/>
<proteinExistence type="predicted"/>
<reference key="1">
    <citation type="journal article" date="1995" name="Science">
        <title>The minimal gene complement of Mycoplasma genitalium.</title>
        <authorList>
            <person name="Fraser C.M."/>
            <person name="Gocayne J.D."/>
            <person name="White O."/>
            <person name="Adams M.D."/>
            <person name="Clayton R.A."/>
            <person name="Fleischmann R.D."/>
            <person name="Bult C.J."/>
            <person name="Kerlavage A.R."/>
            <person name="Sutton G.G."/>
            <person name="Kelley J.M."/>
            <person name="Fritchman J.L."/>
            <person name="Weidman J.F."/>
            <person name="Small K.V."/>
            <person name="Sandusky M."/>
            <person name="Fuhrmann J.L."/>
            <person name="Nguyen D.T."/>
            <person name="Utterback T.R."/>
            <person name="Saudek D.M."/>
            <person name="Phillips C.A."/>
            <person name="Merrick J.M."/>
            <person name="Tomb J.-F."/>
            <person name="Dougherty B.A."/>
            <person name="Bott K.F."/>
            <person name="Hu P.-C."/>
            <person name="Lucier T.S."/>
            <person name="Peterson S.N."/>
            <person name="Smith H.O."/>
            <person name="Hutchison C.A. III"/>
            <person name="Venter J.C."/>
        </authorList>
    </citation>
    <scope>NUCLEOTIDE SEQUENCE [LARGE SCALE GENOMIC DNA]</scope>
    <source>
        <strain>ATCC 33530 / DSM 19775 / NCTC 10195 / G37</strain>
    </source>
</reference>
<reference key="2">
    <citation type="submission" date="1998-10" db="EMBL/GenBank/DDBJ databases">
        <authorList>
            <person name="Fraser C.M."/>
            <person name="Gocayne J.D."/>
            <person name="White O."/>
            <person name="Adams M.D."/>
            <person name="Clayton R.A."/>
            <person name="Fleischmann R.D."/>
            <person name="Bult C.J."/>
            <person name="Kerlavage A.R."/>
            <person name="Sutton G.G."/>
            <person name="Kelley J.M."/>
            <person name="Fritchman J.L."/>
            <person name="Weidman J.F."/>
            <person name="Small K.V."/>
            <person name="Sandusky M."/>
            <person name="Fuhrmann J.L."/>
            <person name="Nguyen D.T."/>
            <person name="Utterback T.R."/>
            <person name="Saudek D.M."/>
            <person name="Phillips C.A."/>
            <person name="Merrick J.M."/>
            <person name="Tomb J.-F."/>
            <person name="Dougherty B.A."/>
            <person name="Bott K.F."/>
            <person name="Hu P.-C."/>
            <person name="Lucier T.S."/>
            <person name="Peterson S.N."/>
            <person name="Smith H.O."/>
            <person name="Hutchison C.A. III"/>
            <person name="Venter J.C."/>
        </authorList>
    </citation>
    <scope>IDENTIFICATION</scope>
</reference>
<reference key="3">
    <citation type="journal article" date="2006" name="Proc. Natl. Acad. Sci. U.S.A.">
        <title>Essential genes of a minimal bacterium.</title>
        <authorList>
            <person name="Glass J.I."/>
            <person name="Assad-Garcia N."/>
            <person name="Alperovich N."/>
            <person name="Yooseph S."/>
            <person name="Lewis M.R."/>
            <person name="Maruf M."/>
            <person name="Hutchison C.A. III"/>
            <person name="Smith H.O."/>
            <person name="Venter J.C."/>
        </authorList>
    </citation>
    <scope>SEQUENCE REVISION</scope>
    <scope>DISRUPTION PHENOTYPE</scope>
    <source>
        <strain>ATCC 33530 / DSM 19775 / NCTC 10195 / G37</strain>
    </source>
</reference>
<sequence length="154" mass="18149">MTVYTYTVFLFNWENIGLMEQQNPDRLKKDRELIYAIVTAKGIISRFFWSILSFLITNLIFFFAAFVALLIYLLASVDNQFAFVFIAAIIFIIFYNIFFLSYLLFIYFKGQKAIENNCKYLLTILDIKSDELLPFSLLGSLRKGYMLDEMLLEQ</sequence>
<keyword id="KW-1003">Cell membrane</keyword>
<keyword id="KW-0472">Membrane</keyword>
<keyword id="KW-1185">Reference proteome</keyword>
<keyword id="KW-0812">Transmembrane</keyword>
<keyword id="KW-1133">Transmembrane helix</keyword>
<comment type="subcellular location">
    <subcellularLocation>
        <location evidence="3">Cell membrane</location>
        <topology evidence="3">Multi-pass membrane protein</topology>
    </subcellularLocation>
</comment>
<comment type="disruption phenotype">
    <text evidence="2">Not essential, it can be deleted.</text>
</comment>
<accession>Q9ZB80</accession>
<dbReference type="EMBL" id="L43967">
    <property type="protein sequence ID" value="AAC71392.2"/>
    <property type="molecule type" value="Genomic_DNA"/>
</dbReference>
<dbReference type="RefSeq" id="WP_010869357.1">
    <property type="nucleotide sequence ID" value="NC_000908.2"/>
</dbReference>
<dbReference type="STRING" id="243273.MG_478"/>
<dbReference type="GeneID" id="88282282"/>
<dbReference type="KEGG" id="mge:MG_478"/>
<dbReference type="eggNOG" id="ENOG5031ZC4">
    <property type="taxonomic scope" value="Bacteria"/>
</dbReference>
<dbReference type="HOGENOM" id="CLU_1957167_0_0_14"/>
<dbReference type="InParanoid" id="Q9ZB80"/>
<dbReference type="OrthoDB" id="10000996at2"/>
<dbReference type="Proteomes" id="UP000000807">
    <property type="component" value="Chromosome"/>
</dbReference>
<dbReference type="GO" id="GO:0005886">
    <property type="term" value="C:plasma membrane"/>
    <property type="evidence" value="ECO:0007669"/>
    <property type="project" value="UniProtKB-SubCell"/>
</dbReference>
<dbReference type="NCBIfam" id="NF045742">
    <property type="entry name" value="MPN163"/>
    <property type="match status" value="1"/>
</dbReference>
<feature type="chain" id="PRO_0000210446" description="Uncharacterized protein MG149.1">
    <location>
        <begin position="1"/>
        <end position="154"/>
    </location>
</feature>
<feature type="transmembrane region" description="Helical" evidence="1">
    <location>
        <begin position="54"/>
        <end position="74"/>
    </location>
</feature>
<feature type="transmembrane region" description="Helical" evidence="1">
    <location>
        <begin position="81"/>
        <end position="101"/>
    </location>
</feature>
<protein>
    <recommendedName>
        <fullName>Uncharacterized protein MG149.1</fullName>
    </recommendedName>
</protein>
<gene>
    <name type="ordered locus">MG478</name>
    <name type="ORF">MG149.1</name>
</gene>